<gene>
    <name type="primary">VETFS</name>
    <name type="ordered locus">84R</name>
    <name type="ORF">B1R</name>
</gene>
<name>ETF1_YMTV5</name>
<protein>
    <recommendedName>
        <fullName>Early transcription factor 70 kDa subunit</fullName>
        <ecNumber>3.6.4.-</ecNumber>
    </recommendedName>
    <alternativeName>
        <fullName>ATP-dependent helicase VETFS</fullName>
    </alternativeName>
    <alternativeName>
        <fullName>VETF small subunit</fullName>
    </alternativeName>
</protein>
<organismHost>
    <name type="scientific">Erythrocebus patas</name>
    <name type="common">Red guenon</name>
    <name type="synonym">Cercopithecus patas</name>
    <dbReference type="NCBI Taxonomy" id="9538"/>
</organismHost>
<organismHost>
    <name type="scientific">Homo sapiens</name>
    <name type="common">Human</name>
    <dbReference type="NCBI Taxonomy" id="9606"/>
</organismHost>
<organismHost>
    <name type="scientific">Macaca</name>
    <name type="common">macaques</name>
    <dbReference type="NCBI Taxonomy" id="9539"/>
</organismHost>
<organismHost>
    <name type="scientific">Papio hamadryas</name>
    <name type="common">Hamadryas baboon</name>
    <dbReference type="NCBI Taxonomy" id="9557"/>
</organismHost>
<comment type="function">
    <text>Acts with RNA polymerase to initiate transcription from early gene promoters. A DNA-dependent ATPase activity is associated with VETF.</text>
</comment>
<comment type="subunit">
    <text>Heterodimer of a 70 kDa and a 82 kDa subunit.</text>
</comment>
<comment type="subcellular location">
    <subcellularLocation>
        <location evidence="3">Virion</location>
    </subcellularLocation>
    <text>All the enzymes and other proteins required to synthesize early mRNAs are packaged within the virion core along with the DNA genome. This is necessary because viral early mRNAs are synthesized within minutes after virus entry into the cell and are extruded through pores in the core particle.</text>
</comment>
<comment type="similarity">
    <text evidence="3">Belongs to the helicase family. VETF subfamily.</text>
</comment>
<evidence type="ECO:0000255" key="1">
    <source>
        <dbReference type="PROSITE-ProRule" id="PRU00541"/>
    </source>
</evidence>
<evidence type="ECO:0000255" key="2">
    <source>
        <dbReference type="PROSITE-ProRule" id="PRU00542"/>
    </source>
</evidence>
<evidence type="ECO:0000305" key="3"/>
<organism>
    <name type="scientific">Yaba monkey tumor virus (strain VR587)</name>
    <name type="common">YMTV</name>
    <dbReference type="NCBI Taxonomy" id="928314"/>
    <lineage>
        <taxon>Viruses</taxon>
        <taxon>Varidnaviria</taxon>
        <taxon>Bamfordvirae</taxon>
        <taxon>Nucleocytoviricota</taxon>
        <taxon>Pokkesviricetes</taxon>
        <taxon>Chitovirales</taxon>
        <taxon>Poxviridae</taxon>
        <taxon>Chordopoxvirinae</taxon>
        <taxon>Yatapoxvirus</taxon>
        <taxon>Yaba monkey tumor virus</taxon>
    </lineage>
</organism>
<feature type="chain" id="PRO_0000099078" description="Early transcription factor 70 kDa subunit">
    <location>
        <begin position="1"/>
        <end position="635"/>
    </location>
</feature>
<feature type="domain" description="Helicase ATP-binding" evidence="1">
    <location>
        <begin position="32"/>
        <end position="185"/>
    </location>
</feature>
<feature type="domain" description="Helicase C-terminal" evidence="2">
    <location>
        <begin position="326"/>
        <end position="505"/>
    </location>
</feature>
<feature type="short sequence motif" description="DEXH box">
    <location>
        <begin position="135"/>
        <end position="138"/>
    </location>
</feature>
<feature type="binding site" evidence="1">
    <location>
        <begin position="45"/>
        <end position="52"/>
    </location>
    <ligand>
        <name>ATP</name>
        <dbReference type="ChEBI" id="CHEBI:30616"/>
    </ligand>
</feature>
<reference key="1">
    <citation type="journal article" date="2003" name="J. Virol.">
        <title>Complete genomic sequence and comparative analysis of the tumorigenic poxvirus Yaba monkey tumor virus.</title>
        <authorList>
            <person name="Brunetti C.R."/>
            <person name="Amano H."/>
            <person name="Ueda Y."/>
            <person name="Qin J."/>
            <person name="Miyamura T."/>
            <person name="Suzuki T."/>
            <person name="Li X."/>
            <person name="Barrett J.W."/>
            <person name="McFadden G."/>
        </authorList>
    </citation>
    <scope>NUCLEOTIDE SEQUENCE [LARGE SCALE GENOMIC DNA]</scope>
</reference>
<sequence>MNLEIVDLFNGHVNSIPNILPHQLATLDYLVRSIIDENKSVLLFHIMGSGKTIIALLFALVASRFKKVYILVPNINILKIFNYSMDVAINLFNSEYILENIFIHSTTSFYSLNYNDNVINYNGLSRYNNAIFIIDEAHNIFGNNTGELMTVIKNKNKIPFLLLSGSPITNTPITLSNIISLMSDENINFGDIIIQGKKVFQILLNENGVNVLKNILKGRISYYEMPSTDLPKVQYHGKKFLDTRVVYCHMSKLQEKDYNNVRKLCNNEMFEKNMNNVSLAVLGQLNFINNLDILFQEQDKELYPNLKISNGILYGDELTTLNISSKFKYFIGKITSLTGKQFIYFSNSTYGGLIIKYIMLSNGYSEYNGSQGTNPKLINGKPKTFAIVTSKMKSSLEDLLNVYNSQLNKDGSQIMFLFSSNIMSESYTLKEVRNIWFMTIPDTFSQYNQILGRSIRKFSYFDISKPVNVYLLATVYADFDDDITSLEDYSLDEINTLPFDIKKLLYLKFKTKETNRIYSILQNISDTYRMPPHPYIVELVLGEIVRQFFYHHSRISFDSKELINAIQLVLPNIDMAKKYINEVVNGHFFVSNKVFDKSLLYRYKNDIITVPFKLSHERFVWGVNFRKEYNVVSSP</sequence>
<proteinExistence type="inferred from homology"/>
<dbReference type="EC" id="3.6.4.-"/>
<dbReference type="EMBL" id="AY386371">
    <property type="protein sequence ID" value="AAR07440.1"/>
    <property type="molecule type" value="Genomic_DNA"/>
</dbReference>
<dbReference type="RefSeq" id="NP_938339.1">
    <property type="nucleotide sequence ID" value="NC_005179.1"/>
</dbReference>
<dbReference type="SMR" id="Q9QB97"/>
<dbReference type="KEGG" id="vg:2943669"/>
<dbReference type="Proteomes" id="UP000008596">
    <property type="component" value="Segment"/>
</dbReference>
<dbReference type="GO" id="GO:0044423">
    <property type="term" value="C:virion component"/>
    <property type="evidence" value="ECO:0007669"/>
    <property type="project" value="UniProtKB-KW"/>
</dbReference>
<dbReference type="GO" id="GO:0005524">
    <property type="term" value="F:ATP binding"/>
    <property type="evidence" value="ECO:0007669"/>
    <property type="project" value="UniProtKB-KW"/>
</dbReference>
<dbReference type="GO" id="GO:0003677">
    <property type="term" value="F:DNA binding"/>
    <property type="evidence" value="ECO:0007669"/>
    <property type="project" value="InterPro"/>
</dbReference>
<dbReference type="GO" id="GO:0004386">
    <property type="term" value="F:helicase activity"/>
    <property type="evidence" value="ECO:0007669"/>
    <property type="project" value="UniProtKB-KW"/>
</dbReference>
<dbReference type="GO" id="GO:0016787">
    <property type="term" value="F:hydrolase activity"/>
    <property type="evidence" value="ECO:0007669"/>
    <property type="project" value="UniProtKB-KW"/>
</dbReference>
<dbReference type="Gene3D" id="3.40.50.300">
    <property type="entry name" value="P-loop containing nucleotide triphosphate hydrolases"/>
    <property type="match status" value="2"/>
</dbReference>
<dbReference type="InterPro" id="IPR002464">
    <property type="entry name" value="DNA/RNA_helicase_DEAH_CS"/>
</dbReference>
<dbReference type="InterPro" id="IPR006935">
    <property type="entry name" value="Helicase/UvrB_N"/>
</dbReference>
<dbReference type="InterPro" id="IPR014001">
    <property type="entry name" value="Helicase_ATP-bd"/>
</dbReference>
<dbReference type="InterPro" id="IPR001650">
    <property type="entry name" value="Helicase_C-like"/>
</dbReference>
<dbReference type="InterPro" id="IPR027417">
    <property type="entry name" value="P-loop_NTPase"/>
</dbReference>
<dbReference type="Pfam" id="PF00271">
    <property type="entry name" value="Helicase_C"/>
    <property type="match status" value="1"/>
</dbReference>
<dbReference type="Pfam" id="PF04851">
    <property type="entry name" value="ResIII"/>
    <property type="match status" value="1"/>
</dbReference>
<dbReference type="SMART" id="SM00487">
    <property type="entry name" value="DEXDc"/>
    <property type="match status" value="1"/>
</dbReference>
<dbReference type="SUPFAM" id="SSF52540">
    <property type="entry name" value="P-loop containing nucleoside triphosphate hydrolases"/>
    <property type="match status" value="2"/>
</dbReference>
<dbReference type="PROSITE" id="PS00690">
    <property type="entry name" value="DEAH_ATP_HELICASE"/>
    <property type="match status" value="1"/>
</dbReference>
<dbReference type="PROSITE" id="PS51192">
    <property type="entry name" value="HELICASE_ATP_BIND_1"/>
    <property type="match status" value="1"/>
</dbReference>
<dbReference type="PROSITE" id="PS51194">
    <property type="entry name" value="HELICASE_CTER"/>
    <property type="match status" value="1"/>
</dbReference>
<accession>Q9QB97</accession>
<keyword id="KW-0010">Activator</keyword>
<keyword id="KW-0067">ATP-binding</keyword>
<keyword id="KW-0347">Helicase</keyword>
<keyword id="KW-0378">Hydrolase</keyword>
<keyword id="KW-0547">Nucleotide-binding</keyword>
<keyword id="KW-1185">Reference proteome</keyword>
<keyword id="KW-0804">Transcription</keyword>
<keyword id="KW-0805">Transcription regulation</keyword>
<keyword id="KW-0946">Virion</keyword>